<protein>
    <recommendedName>
        <fullName evidence="1">Aspartyl/glutamyl-tRNA(Asn/Gln) amidotransferase subunit C</fullName>
        <shortName evidence="1">Asp/Glu-ADT subunit C</shortName>
        <ecNumber evidence="1">6.3.5.-</ecNumber>
    </recommendedName>
</protein>
<name>GATC_RICTY</name>
<feature type="chain" id="PRO_0000274844" description="Aspartyl/glutamyl-tRNA(Asn/Gln) amidotransferase subunit C">
    <location>
        <begin position="1"/>
        <end position="100"/>
    </location>
</feature>
<keyword id="KW-0067">ATP-binding</keyword>
<keyword id="KW-0436">Ligase</keyword>
<keyword id="KW-0547">Nucleotide-binding</keyword>
<keyword id="KW-0648">Protein biosynthesis</keyword>
<proteinExistence type="inferred from homology"/>
<comment type="function">
    <text evidence="1">Allows the formation of correctly charged Asn-tRNA(Asn) or Gln-tRNA(Gln) through the transamidation of misacylated Asp-tRNA(Asn) or Glu-tRNA(Gln) in organisms which lack either or both of asparaginyl-tRNA or glutaminyl-tRNA synthetases. The reaction takes place in the presence of glutamine and ATP through an activated phospho-Asp-tRNA(Asn) or phospho-Glu-tRNA(Gln).</text>
</comment>
<comment type="catalytic activity">
    <reaction evidence="1">
        <text>L-glutamyl-tRNA(Gln) + L-glutamine + ATP + H2O = L-glutaminyl-tRNA(Gln) + L-glutamate + ADP + phosphate + H(+)</text>
        <dbReference type="Rhea" id="RHEA:17521"/>
        <dbReference type="Rhea" id="RHEA-COMP:9681"/>
        <dbReference type="Rhea" id="RHEA-COMP:9684"/>
        <dbReference type="ChEBI" id="CHEBI:15377"/>
        <dbReference type="ChEBI" id="CHEBI:15378"/>
        <dbReference type="ChEBI" id="CHEBI:29985"/>
        <dbReference type="ChEBI" id="CHEBI:30616"/>
        <dbReference type="ChEBI" id="CHEBI:43474"/>
        <dbReference type="ChEBI" id="CHEBI:58359"/>
        <dbReference type="ChEBI" id="CHEBI:78520"/>
        <dbReference type="ChEBI" id="CHEBI:78521"/>
        <dbReference type="ChEBI" id="CHEBI:456216"/>
    </reaction>
</comment>
<comment type="catalytic activity">
    <reaction evidence="1">
        <text>L-aspartyl-tRNA(Asn) + L-glutamine + ATP + H2O = L-asparaginyl-tRNA(Asn) + L-glutamate + ADP + phosphate + 2 H(+)</text>
        <dbReference type="Rhea" id="RHEA:14513"/>
        <dbReference type="Rhea" id="RHEA-COMP:9674"/>
        <dbReference type="Rhea" id="RHEA-COMP:9677"/>
        <dbReference type="ChEBI" id="CHEBI:15377"/>
        <dbReference type="ChEBI" id="CHEBI:15378"/>
        <dbReference type="ChEBI" id="CHEBI:29985"/>
        <dbReference type="ChEBI" id="CHEBI:30616"/>
        <dbReference type="ChEBI" id="CHEBI:43474"/>
        <dbReference type="ChEBI" id="CHEBI:58359"/>
        <dbReference type="ChEBI" id="CHEBI:78515"/>
        <dbReference type="ChEBI" id="CHEBI:78516"/>
        <dbReference type="ChEBI" id="CHEBI:456216"/>
    </reaction>
</comment>
<comment type="subunit">
    <text evidence="1">Heterotrimer of A, B and C subunits.</text>
</comment>
<comment type="similarity">
    <text evidence="1">Belongs to the GatC family.</text>
</comment>
<gene>
    <name evidence="1" type="primary">gatC</name>
    <name type="ordered locus">RT0142</name>
</gene>
<accession>Q68XL5</accession>
<organism>
    <name type="scientific">Rickettsia typhi (strain ATCC VR-144 / Wilmington)</name>
    <dbReference type="NCBI Taxonomy" id="257363"/>
    <lineage>
        <taxon>Bacteria</taxon>
        <taxon>Pseudomonadati</taxon>
        <taxon>Pseudomonadota</taxon>
        <taxon>Alphaproteobacteria</taxon>
        <taxon>Rickettsiales</taxon>
        <taxon>Rickettsiaceae</taxon>
        <taxon>Rickettsieae</taxon>
        <taxon>Rickettsia</taxon>
        <taxon>typhus group</taxon>
    </lineage>
</organism>
<sequence length="100" mass="11372">MITKEEAQKIAKLARLKFEKDIVEKFSTQLSTIMNMINILNEIDCKDIEPLTSVSNMNARMREDTVTSSDLSNKLFDNVSGNSARLAKEVKYFITPKVVE</sequence>
<dbReference type="EC" id="6.3.5.-" evidence="1"/>
<dbReference type="EMBL" id="AE017197">
    <property type="protein sequence ID" value="AAU03627.1"/>
    <property type="molecule type" value="Genomic_DNA"/>
</dbReference>
<dbReference type="RefSeq" id="WP_011190614.1">
    <property type="nucleotide sequence ID" value="NC_006142.1"/>
</dbReference>
<dbReference type="SMR" id="Q68XL5"/>
<dbReference type="KEGG" id="rty:RT0142"/>
<dbReference type="eggNOG" id="COG0721">
    <property type="taxonomic scope" value="Bacteria"/>
</dbReference>
<dbReference type="HOGENOM" id="CLU_105899_2_0_5"/>
<dbReference type="OrthoDB" id="9794326at2"/>
<dbReference type="Proteomes" id="UP000000604">
    <property type="component" value="Chromosome"/>
</dbReference>
<dbReference type="GO" id="GO:0050566">
    <property type="term" value="F:asparaginyl-tRNA synthase (glutamine-hydrolyzing) activity"/>
    <property type="evidence" value="ECO:0007669"/>
    <property type="project" value="RHEA"/>
</dbReference>
<dbReference type="GO" id="GO:0005524">
    <property type="term" value="F:ATP binding"/>
    <property type="evidence" value="ECO:0007669"/>
    <property type="project" value="UniProtKB-KW"/>
</dbReference>
<dbReference type="GO" id="GO:0050567">
    <property type="term" value="F:glutaminyl-tRNA synthase (glutamine-hydrolyzing) activity"/>
    <property type="evidence" value="ECO:0007669"/>
    <property type="project" value="UniProtKB-UniRule"/>
</dbReference>
<dbReference type="GO" id="GO:0006450">
    <property type="term" value="P:regulation of translational fidelity"/>
    <property type="evidence" value="ECO:0007669"/>
    <property type="project" value="InterPro"/>
</dbReference>
<dbReference type="GO" id="GO:0006412">
    <property type="term" value="P:translation"/>
    <property type="evidence" value="ECO:0007669"/>
    <property type="project" value="UniProtKB-UniRule"/>
</dbReference>
<dbReference type="Gene3D" id="1.10.20.60">
    <property type="entry name" value="Glu-tRNAGln amidotransferase C subunit, N-terminal domain"/>
    <property type="match status" value="1"/>
</dbReference>
<dbReference type="HAMAP" id="MF_00122">
    <property type="entry name" value="GatC"/>
    <property type="match status" value="1"/>
</dbReference>
<dbReference type="InterPro" id="IPR036113">
    <property type="entry name" value="Asp/Glu-ADT_sf_sub_c"/>
</dbReference>
<dbReference type="InterPro" id="IPR003837">
    <property type="entry name" value="GatC"/>
</dbReference>
<dbReference type="NCBIfam" id="TIGR00135">
    <property type="entry name" value="gatC"/>
    <property type="match status" value="1"/>
</dbReference>
<dbReference type="Pfam" id="PF02686">
    <property type="entry name" value="GatC"/>
    <property type="match status" value="1"/>
</dbReference>
<dbReference type="SUPFAM" id="SSF141000">
    <property type="entry name" value="Glu-tRNAGln amidotransferase C subunit"/>
    <property type="match status" value="1"/>
</dbReference>
<evidence type="ECO:0000255" key="1">
    <source>
        <dbReference type="HAMAP-Rule" id="MF_00122"/>
    </source>
</evidence>
<reference key="1">
    <citation type="journal article" date="2004" name="J. Bacteriol.">
        <title>Complete genome sequence of Rickettsia typhi and comparison with sequences of other Rickettsiae.</title>
        <authorList>
            <person name="McLeod M.P."/>
            <person name="Qin X."/>
            <person name="Karpathy S.E."/>
            <person name="Gioia J."/>
            <person name="Highlander S.K."/>
            <person name="Fox G.E."/>
            <person name="McNeill T.Z."/>
            <person name="Jiang H."/>
            <person name="Muzny D."/>
            <person name="Jacob L.S."/>
            <person name="Hawes A.C."/>
            <person name="Sodergren E."/>
            <person name="Gill R."/>
            <person name="Hume J."/>
            <person name="Morgan M."/>
            <person name="Fan G."/>
            <person name="Amin A.G."/>
            <person name="Gibbs R.A."/>
            <person name="Hong C."/>
            <person name="Yu X.-J."/>
            <person name="Walker D.H."/>
            <person name="Weinstock G.M."/>
        </authorList>
    </citation>
    <scope>NUCLEOTIDE SEQUENCE [LARGE SCALE GENOMIC DNA]</scope>
    <source>
        <strain>ATCC VR-144 / Wilmington</strain>
    </source>
</reference>